<sequence length="48" mass="5912">MSLKEKILDKVEDFLKTIIIKYWYIDLTITIFAFLILYLIEKFRKNKV</sequence>
<organism>
    <name type="scientific">Acidianus bottle-shaped virus (isolate Italy/Pozzuoli)</name>
    <name type="common">ABV</name>
    <dbReference type="NCBI Taxonomy" id="654911"/>
    <lineage>
        <taxon>Viruses</taxon>
        <taxon>Viruses incertae sedis</taxon>
        <taxon>Ampullaviridae</taxon>
        <taxon>Bottigliavirus</taxon>
        <taxon>Bottigliavirus ABV</taxon>
    </lineage>
</organism>
<keyword id="KW-1043">Host membrane</keyword>
<keyword id="KW-0472">Membrane</keyword>
<keyword id="KW-1185">Reference proteome</keyword>
<keyword id="KW-0812">Transmembrane</keyword>
<keyword id="KW-1133">Transmembrane helix</keyword>
<accession>A4ZUC8</accession>
<evidence type="ECO:0000255" key="1"/>
<evidence type="ECO:0000305" key="2"/>
<gene>
    <name type="ORF">ORF48a</name>
</gene>
<organismHost>
    <name type="scientific">Acidianus convivator</name>
    <dbReference type="NCBI Taxonomy" id="269667"/>
</organismHost>
<feature type="chain" id="PRO_0000384821" description="Uncharacterized protein ORF48a">
    <location>
        <begin position="1"/>
        <end position="48"/>
    </location>
</feature>
<feature type="transmembrane region" description="Helical" evidence="1">
    <location>
        <begin position="18"/>
        <end position="38"/>
    </location>
</feature>
<reference key="1">
    <citation type="journal article" date="2007" name="Virology">
        <title>Genome of the Acidianus bottle-shaped virus and insights into the replication and packaging mechanisms.</title>
        <authorList>
            <person name="Peng X."/>
            <person name="Basta T."/>
            <person name="Haring M."/>
            <person name="Garrett R.A."/>
            <person name="Prangishvili D."/>
        </authorList>
    </citation>
    <scope>NUCLEOTIDE SEQUENCE [GENOMIC DNA]</scope>
</reference>
<dbReference type="EMBL" id="EF432053">
    <property type="protein sequence ID" value="ABP73432.1"/>
    <property type="molecule type" value="Genomic_DNA"/>
</dbReference>
<dbReference type="SMR" id="A4ZUC8"/>
<dbReference type="KEGG" id="vg:5129819"/>
<dbReference type="Proteomes" id="UP000000513">
    <property type="component" value="Segment"/>
</dbReference>
<dbReference type="GO" id="GO:0033644">
    <property type="term" value="C:host cell membrane"/>
    <property type="evidence" value="ECO:0007669"/>
    <property type="project" value="UniProtKB-SubCell"/>
</dbReference>
<dbReference type="GO" id="GO:0016020">
    <property type="term" value="C:membrane"/>
    <property type="evidence" value="ECO:0007669"/>
    <property type="project" value="UniProtKB-KW"/>
</dbReference>
<name>Y048A_ABVP</name>
<proteinExistence type="predicted"/>
<comment type="subcellular location">
    <subcellularLocation>
        <location evidence="2">Host membrane</location>
        <topology evidence="2">Single-pass membrane protein</topology>
    </subcellularLocation>
</comment>
<protein>
    <recommendedName>
        <fullName>Uncharacterized protein ORF48a</fullName>
    </recommendedName>
</protein>